<keyword id="KW-0170">Cobalt</keyword>
<keyword id="KW-0963">Cytoplasm</keyword>
<keyword id="KW-0460">Magnesium</keyword>
<keyword id="KW-0479">Metal-binding</keyword>
<keyword id="KW-0520">NAD</keyword>
<keyword id="KW-0521">NADP</keyword>
<keyword id="KW-0560">Oxidoreductase</keyword>
<keyword id="KW-0664">Pyridoxine biosynthesis</keyword>
<keyword id="KW-1185">Reference proteome</keyword>
<keyword id="KW-0862">Zinc</keyword>
<gene>
    <name evidence="1" type="primary">pdxA</name>
    <name type="ordered locus">TM1040_0945</name>
</gene>
<name>PDXA_RUEST</name>
<protein>
    <recommendedName>
        <fullName evidence="1">4-hydroxythreonine-4-phosphate dehydrogenase</fullName>
        <ecNumber evidence="1">1.1.1.262</ecNumber>
    </recommendedName>
    <alternativeName>
        <fullName evidence="1">4-(phosphohydroxy)-L-threonine dehydrogenase</fullName>
    </alternativeName>
</protein>
<proteinExistence type="inferred from homology"/>
<accession>Q1GI38</accession>
<feature type="chain" id="PRO_1000051519" description="4-hydroxythreonine-4-phosphate dehydrogenase">
    <location>
        <begin position="1"/>
        <end position="326"/>
    </location>
</feature>
<feature type="binding site" evidence="1">
    <location>
        <position position="132"/>
    </location>
    <ligand>
        <name>substrate</name>
    </ligand>
</feature>
<feature type="binding site" evidence="1">
    <location>
        <position position="133"/>
    </location>
    <ligand>
        <name>substrate</name>
    </ligand>
</feature>
<feature type="binding site" evidence="1">
    <location>
        <position position="162"/>
    </location>
    <ligand>
        <name>a divalent metal cation</name>
        <dbReference type="ChEBI" id="CHEBI:60240"/>
        <note>ligand shared between dimeric partners</note>
    </ligand>
</feature>
<feature type="binding site" evidence="1">
    <location>
        <position position="207"/>
    </location>
    <ligand>
        <name>a divalent metal cation</name>
        <dbReference type="ChEBI" id="CHEBI:60240"/>
        <note>ligand shared between dimeric partners</note>
    </ligand>
</feature>
<feature type="binding site" evidence="1">
    <location>
        <position position="262"/>
    </location>
    <ligand>
        <name>a divalent metal cation</name>
        <dbReference type="ChEBI" id="CHEBI:60240"/>
        <note>ligand shared between dimeric partners</note>
    </ligand>
</feature>
<feature type="binding site" evidence="1">
    <location>
        <position position="270"/>
    </location>
    <ligand>
        <name>substrate</name>
    </ligand>
</feature>
<feature type="binding site" evidence="1">
    <location>
        <position position="279"/>
    </location>
    <ligand>
        <name>substrate</name>
    </ligand>
</feature>
<feature type="binding site" evidence="1">
    <location>
        <position position="288"/>
    </location>
    <ligand>
        <name>substrate</name>
    </ligand>
</feature>
<comment type="function">
    <text evidence="1">Catalyzes the NAD(P)-dependent oxidation of 4-(phosphooxy)-L-threonine (HTP) into 2-amino-3-oxo-4-(phosphooxy)butyric acid which spontaneously decarboxylates to form 3-amino-2-oxopropyl phosphate (AHAP).</text>
</comment>
<comment type="catalytic activity">
    <reaction evidence="1">
        <text>4-(phosphooxy)-L-threonine + NAD(+) = 3-amino-2-oxopropyl phosphate + CO2 + NADH</text>
        <dbReference type="Rhea" id="RHEA:32275"/>
        <dbReference type="ChEBI" id="CHEBI:16526"/>
        <dbReference type="ChEBI" id="CHEBI:57279"/>
        <dbReference type="ChEBI" id="CHEBI:57540"/>
        <dbReference type="ChEBI" id="CHEBI:57945"/>
        <dbReference type="ChEBI" id="CHEBI:58452"/>
        <dbReference type="EC" id="1.1.1.262"/>
    </reaction>
</comment>
<comment type="cofactor">
    <cofactor evidence="1">
        <name>Zn(2+)</name>
        <dbReference type="ChEBI" id="CHEBI:29105"/>
    </cofactor>
    <cofactor evidence="1">
        <name>Mg(2+)</name>
        <dbReference type="ChEBI" id="CHEBI:18420"/>
    </cofactor>
    <cofactor evidence="1">
        <name>Co(2+)</name>
        <dbReference type="ChEBI" id="CHEBI:48828"/>
    </cofactor>
    <text evidence="1">Binds 1 divalent metal cation per subunit. Can use ions such as Zn(2+), Mg(2+) or Co(2+).</text>
</comment>
<comment type="pathway">
    <text evidence="1">Cofactor biosynthesis; pyridoxine 5'-phosphate biosynthesis; pyridoxine 5'-phosphate from D-erythrose 4-phosphate: step 4/5.</text>
</comment>
<comment type="subunit">
    <text evidence="1">Homodimer.</text>
</comment>
<comment type="subcellular location">
    <subcellularLocation>
        <location evidence="1">Cytoplasm</location>
    </subcellularLocation>
</comment>
<comment type="miscellaneous">
    <text evidence="1">The active site is located at the dimer interface.</text>
</comment>
<comment type="similarity">
    <text evidence="1">Belongs to the PdxA family.</text>
</comment>
<organism>
    <name type="scientific">Ruegeria sp. (strain TM1040)</name>
    <name type="common">Silicibacter sp.</name>
    <dbReference type="NCBI Taxonomy" id="292414"/>
    <lineage>
        <taxon>Bacteria</taxon>
        <taxon>Pseudomonadati</taxon>
        <taxon>Pseudomonadota</taxon>
        <taxon>Alphaproteobacteria</taxon>
        <taxon>Rhodobacterales</taxon>
        <taxon>Roseobacteraceae</taxon>
        <taxon>Ruegeria</taxon>
    </lineage>
</organism>
<reference key="1">
    <citation type="submission" date="2006-05" db="EMBL/GenBank/DDBJ databases">
        <title>Complete sequence of chromosome of Silicibacter sp. TM1040.</title>
        <authorList>
            <consortium name="US DOE Joint Genome Institute"/>
            <person name="Copeland A."/>
            <person name="Lucas S."/>
            <person name="Lapidus A."/>
            <person name="Barry K."/>
            <person name="Detter J.C."/>
            <person name="Glavina del Rio T."/>
            <person name="Hammon N."/>
            <person name="Israni S."/>
            <person name="Dalin E."/>
            <person name="Tice H."/>
            <person name="Pitluck S."/>
            <person name="Brettin T."/>
            <person name="Bruce D."/>
            <person name="Han C."/>
            <person name="Tapia R."/>
            <person name="Goodwin L."/>
            <person name="Thompson L.S."/>
            <person name="Gilna P."/>
            <person name="Schmutz J."/>
            <person name="Larimer F."/>
            <person name="Land M."/>
            <person name="Hauser L."/>
            <person name="Kyrpides N."/>
            <person name="Kim E."/>
            <person name="Belas R."/>
            <person name="Moran M.A."/>
            <person name="Buchan A."/>
            <person name="Gonzalez J.M."/>
            <person name="Schell M.A."/>
            <person name="Sun F."/>
            <person name="Richardson P."/>
        </authorList>
    </citation>
    <scope>NUCLEOTIDE SEQUENCE [LARGE SCALE GENOMIC DNA]</scope>
    <source>
        <strain>TM1040</strain>
    </source>
</reference>
<evidence type="ECO:0000255" key="1">
    <source>
        <dbReference type="HAMAP-Rule" id="MF_00536"/>
    </source>
</evidence>
<sequence length="326" mass="34339">MTGAPQVIALSCGEPAGIGPEIAVAAWDQLRADCPFVWIGDPRHLPSSHPWQPVSAPAEALQVSADALPVWPLEFAGNTTKGEADPQNASGVIQSIKTGVELVTSGKAAALCTAPIHKKALIDGAGFAYPGHTEFLAALGGVDHVVMMLASAALRVVPATIHIPLSAVPEVLTPDHLRRVITLTDRGLRDQFGLTAPRIAVTGLNPHAGEGGAMGQEEGDWIEALIREMQTEGYRLTGPHPADTLFHAAARARYDAAIAMYHDQALIPIKTLDFDKGVNVTLGLPFIRTSPDHGTAFDIAGKGLANPSSLIEALRLAQTMAKTRQP</sequence>
<dbReference type="EC" id="1.1.1.262" evidence="1"/>
<dbReference type="EMBL" id="CP000377">
    <property type="protein sequence ID" value="ABF63678.1"/>
    <property type="molecule type" value="Genomic_DNA"/>
</dbReference>
<dbReference type="RefSeq" id="WP_011538288.1">
    <property type="nucleotide sequence ID" value="NC_008044.1"/>
</dbReference>
<dbReference type="SMR" id="Q1GI38"/>
<dbReference type="STRING" id="292414.TM1040_0945"/>
<dbReference type="KEGG" id="sit:TM1040_0945"/>
<dbReference type="eggNOG" id="COG1995">
    <property type="taxonomic scope" value="Bacteria"/>
</dbReference>
<dbReference type="HOGENOM" id="CLU_040168_2_0_5"/>
<dbReference type="OrthoDB" id="9801783at2"/>
<dbReference type="UniPathway" id="UPA00244">
    <property type="reaction ID" value="UER00312"/>
</dbReference>
<dbReference type="Proteomes" id="UP000000636">
    <property type="component" value="Chromosome"/>
</dbReference>
<dbReference type="GO" id="GO:0005737">
    <property type="term" value="C:cytoplasm"/>
    <property type="evidence" value="ECO:0007669"/>
    <property type="project" value="UniProtKB-SubCell"/>
</dbReference>
<dbReference type="GO" id="GO:0050570">
    <property type="term" value="F:4-hydroxythreonine-4-phosphate dehydrogenase activity"/>
    <property type="evidence" value="ECO:0007669"/>
    <property type="project" value="UniProtKB-UniRule"/>
</dbReference>
<dbReference type="GO" id="GO:0050897">
    <property type="term" value="F:cobalt ion binding"/>
    <property type="evidence" value="ECO:0007669"/>
    <property type="project" value="UniProtKB-UniRule"/>
</dbReference>
<dbReference type="GO" id="GO:0000287">
    <property type="term" value="F:magnesium ion binding"/>
    <property type="evidence" value="ECO:0007669"/>
    <property type="project" value="UniProtKB-UniRule"/>
</dbReference>
<dbReference type="GO" id="GO:0051287">
    <property type="term" value="F:NAD binding"/>
    <property type="evidence" value="ECO:0007669"/>
    <property type="project" value="InterPro"/>
</dbReference>
<dbReference type="GO" id="GO:0008270">
    <property type="term" value="F:zinc ion binding"/>
    <property type="evidence" value="ECO:0007669"/>
    <property type="project" value="UniProtKB-UniRule"/>
</dbReference>
<dbReference type="GO" id="GO:0042823">
    <property type="term" value="P:pyridoxal phosphate biosynthetic process"/>
    <property type="evidence" value="ECO:0007669"/>
    <property type="project" value="UniProtKB-UniRule"/>
</dbReference>
<dbReference type="GO" id="GO:0008615">
    <property type="term" value="P:pyridoxine biosynthetic process"/>
    <property type="evidence" value="ECO:0007669"/>
    <property type="project" value="UniProtKB-UniRule"/>
</dbReference>
<dbReference type="Gene3D" id="3.40.718.10">
    <property type="entry name" value="Isopropylmalate Dehydrogenase"/>
    <property type="match status" value="1"/>
</dbReference>
<dbReference type="HAMAP" id="MF_00536">
    <property type="entry name" value="PdxA"/>
    <property type="match status" value="1"/>
</dbReference>
<dbReference type="InterPro" id="IPR037510">
    <property type="entry name" value="PdxA"/>
</dbReference>
<dbReference type="InterPro" id="IPR005255">
    <property type="entry name" value="PdxA_fam"/>
</dbReference>
<dbReference type="NCBIfam" id="TIGR00557">
    <property type="entry name" value="pdxA"/>
    <property type="match status" value="1"/>
</dbReference>
<dbReference type="NCBIfam" id="NF003699">
    <property type="entry name" value="PRK05312.1"/>
    <property type="match status" value="1"/>
</dbReference>
<dbReference type="PANTHER" id="PTHR30004">
    <property type="entry name" value="4-HYDROXYTHREONINE-4-PHOSPHATE DEHYDROGENASE"/>
    <property type="match status" value="1"/>
</dbReference>
<dbReference type="PANTHER" id="PTHR30004:SF6">
    <property type="entry name" value="D-THREONATE 4-PHOSPHATE DEHYDROGENASE"/>
    <property type="match status" value="1"/>
</dbReference>
<dbReference type="Pfam" id="PF04166">
    <property type="entry name" value="PdxA"/>
    <property type="match status" value="1"/>
</dbReference>
<dbReference type="SUPFAM" id="SSF53659">
    <property type="entry name" value="Isocitrate/Isopropylmalate dehydrogenase-like"/>
    <property type="match status" value="1"/>
</dbReference>